<feature type="chain" id="PRO_0000368416" description="ATP synthase subunit b">
    <location>
        <begin position="1"/>
        <end position="156"/>
    </location>
</feature>
<feature type="transmembrane region" description="Helical" evidence="1">
    <location>
        <begin position="11"/>
        <end position="31"/>
    </location>
</feature>
<accession>A8ACP2</accession>
<dbReference type="EMBL" id="CP000822">
    <property type="protein sequence ID" value="ABV11255.1"/>
    <property type="molecule type" value="Genomic_DNA"/>
</dbReference>
<dbReference type="RefSeq" id="WP_003827022.1">
    <property type="nucleotide sequence ID" value="NC_009792.1"/>
</dbReference>
<dbReference type="BMRB" id="A8ACP2"/>
<dbReference type="SMR" id="A8ACP2"/>
<dbReference type="STRING" id="290338.CKO_00076"/>
<dbReference type="GeneID" id="93035278"/>
<dbReference type="KEGG" id="cko:CKO_00076"/>
<dbReference type="HOGENOM" id="CLU_079215_4_5_6"/>
<dbReference type="OrthoDB" id="9788020at2"/>
<dbReference type="Proteomes" id="UP000008148">
    <property type="component" value="Chromosome"/>
</dbReference>
<dbReference type="GO" id="GO:0005886">
    <property type="term" value="C:plasma membrane"/>
    <property type="evidence" value="ECO:0007669"/>
    <property type="project" value="UniProtKB-SubCell"/>
</dbReference>
<dbReference type="GO" id="GO:0045259">
    <property type="term" value="C:proton-transporting ATP synthase complex"/>
    <property type="evidence" value="ECO:0007669"/>
    <property type="project" value="UniProtKB-KW"/>
</dbReference>
<dbReference type="GO" id="GO:0046933">
    <property type="term" value="F:proton-transporting ATP synthase activity, rotational mechanism"/>
    <property type="evidence" value="ECO:0007669"/>
    <property type="project" value="UniProtKB-UniRule"/>
</dbReference>
<dbReference type="GO" id="GO:0046961">
    <property type="term" value="F:proton-transporting ATPase activity, rotational mechanism"/>
    <property type="evidence" value="ECO:0007669"/>
    <property type="project" value="TreeGrafter"/>
</dbReference>
<dbReference type="CDD" id="cd06503">
    <property type="entry name" value="ATP-synt_Fo_b"/>
    <property type="match status" value="1"/>
</dbReference>
<dbReference type="FunFam" id="1.20.5.620:FF:000001">
    <property type="entry name" value="ATP synthase subunit b"/>
    <property type="match status" value="1"/>
</dbReference>
<dbReference type="Gene3D" id="1.20.5.620">
    <property type="entry name" value="F1F0 ATP synthase subunit B, membrane domain"/>
    <property type="match status" value="1"/>
</dbReference>
<dbReference type="HAMAP" id="MF_01398">
    <property type="entry name" value="ATP_synth_b_bprime"/>
    <property type="match status" value="1"/>
</dbReference>
<dbReference type="InterPro" id="IPR028987">
    <property type="entry name" value="ATP_synth_B-like_membr_sf"/>
</dbReference>
<dbReference type="InterPro" id="IPR002146">
    <property type="entry name" value="ATP_synth_b/b'su_bac/chlpt"/>
</dbReference>
<dbReference type="InterPro" id="IPR005864">
    <property type="entry name" value="ATP_synth_F0_bsu_bac"/>
</dbReference>
<dbReference type="InterPro" id="IPR050059">
    <property type="entry name" value="ATP_synthase_B_chain"/>
</dbReference>
<dbReference type="NCBIfam" id="TIGR01144">
    <property type="entry name" value="ATP_synt_b"/>
    <property type="match status" value="1"/>
</dbReference>
<dbReference type="NCBIfam" id="NF004411">
    <property type="entry name" value="PRK05759.1-2"/>
    <property type="match status" value="1"/>
</dbReference>
<dbReference type="NCBIfam" id="NF004413">
    <property type="entry name" value="PRK05759.1-4"/>
    <property type="match status" value="1"/>
</dbReference>
<dbReference type="PANTHER" id="PTHR33445:SF1">
    <property type="entry name" value="ATP SYNTHASE SUBUNIT B"/>
    <property type="match status" value="1"/>
</dbReference>
<dbReference type="PANTHER" id="PTHR33445">
    <property type="entry name" value="ATP SYNTHASE SUBUNIT B', CHLOROPLASTIC"/>
    <property type="match status" value="1"/>
</dbReference>
<dbReference type="Pfam" id="PF00430">
    <property type="entry name" value="ATP-synt_B"/>
    <property type="match status" value="1"/>
</dbReference>
<dbReference type="SUPFAM" id="SSF81573">
    <property type="entry name" value="F1F0 ATP synthase subunit B, membrane domain"/>
    <property type="match status" value="1"/>
</dbReference>
<evidence type="ECO:0000255" key="1">
    <source>
        <dbReference type="HAMAP-Rule" id="MF_01398"/>
    </source>
</evidence>
<proteinExistence type="inferred from homology"/>
<name>ATPF_CITK8</name>
<reference key="1">
    <citation type="submission" date="2007-08" db="EMBL/GenBank/DDBJ databases">
        <authorList>
            <consortium name="The Citrobacter koseri Genome Sequencing Project"/>
            <person name="McClelland M."/>
            <person name="Sanderson E.K."/>
            <person name="Porwollik S."/>
            <person name="Spieth J."/>
            <person name="Clifton W.S."/>
            <person name="Latreille P."/>
            <person name="Courtney L."/>
            <person name="Wang C."/>
            <person name="Pepin K."/>
            <person name="Bhonagiri V."/>
            <person name="Nash W."/>
            <person name="Johnson M."/>
            <person name="Thiruvilangam P."/>
            <person name="Wilson R."/>
        </authorList>
    </citation>
    <scope>NUCLEOTIDE SEQUENCE [LARGE SCALE GENOMIC DNA]</scope>
    <source>
        <strain>ATCC BAA-895 / CDC 4225-83 / SGSC4696</strain>
    </source>
</reference>
<gene>
    <name evidence="1" type="primary">atpF</name>
    <name type="ordered locus">CKO_00076</name>
</gene>
<sequence>MNLNATILGQAIAFVLFVLFCMKYVWPPLMAAIEKRQKEIADGLASAERAHKDLDLAKASATDQLKKAKAEAQVIIEQANKRRAQILDEAKTEAEQERTKIVAQAQAEIDAERKRAREELRKQVAILAVAGAEKIIERSVDEAANSDIVDKLVAEL</sequence>
<organism>
    <name type="scientific">Citrobacter koseri (strain ATCC BAA-895 / CDC 4225-83 / SGSC4696)</name>
    <dbReference type="NCBI Taxonomy" id="290338"/>
    <lineage>
        <taxon>Bacteria</taxon>
        <taxon>Pseudomonadati</taxon>
        <taxon>Pseudomonadota</taxon>
        <taxon>Gammaproteobacteria</taxon>
        <taxon>Enterobacterales</taxon>
        <taxon>Enterobacteriaceae</taxon>
        <taxon>Citrobacter</taxon>
    </lineage>
</organism>
<keyword id="KW-0066">ATP synthesis</keyword>
<keyword id="KW-0997">Cell inner membrane</keyword>
<keyword id="KW-1003">Cell membrane</keyword>
<keyword id="KW-0138">CF(0)</keyword>
<keyword id="KW-0375">Hydrogen ion transport</keyword>
<keyword id="KW-0406">Ion transport</keyword>
<keyword id="KW-0472">Membrane</keyword>
<keyword id="KW-1185">Reference proteome</keyword>
<keyword id="KW-0812">Transmembrane</keyword>
<keyword id="KW-1133">Transmembrane helix</keyword>
<keyword id="KW-0813">Transport</keyword>
<protein>
    <recommendedName>
        <fullName evidence="1">ATP synthase subunit b</fullName>
    </recommendedName>
    <alternativeName>
        <fullName evidence="1">ATP synthase F(0) sector subunit b</fullName>
    </alternativeName>
    <alternativeName>
        <fullName evidence="1">ATPase subunit I</fullName>
    </alternativeName>
    <alternativeName>
        <fullName evidence="1">F-type ATPase subunit b</fullName>
        <shortName evidence="1">F-ATPase subunit b</shortName>
    </alternativeName>
</protein>
<comment type="function">
    <text evidence="1">F(1)F(0) ATP synthase produces ATP from ADP in the presence of a proton or sodium gradient. F-type ATPases consist of two structural domains, F(1) containing the extramembraneous catalytic core and F(0) containing the membrane proton channel, linked together by a central stalk and a peripheral stalk. During catalysis, ATP synthesis in the catalytic domain of F(1) is coupled via a rotary mechanism of the central stalk subunits to proton translocation.</text>
</comment>
<comment type="function">
    <text evidence="1">Component of the F(0) channel, it forms part of the peripheral stalk, linking F(1) to F(0).</text>
</comment>
<comment type="subunit">
    <text evidence="1">F-type ATPases have 2 components, F(1) - the catalytic core - and F(0) - the membrane proton channel. F(1) has five subunits: alpha(3), beta(3), gamma(1), delta(1), epsilon(1). F(0) has three main subunits: a(1), b(2) and c(10-14). The alpha and beta chains form an alternating ring which encloses part of the gamma chain. F(1) is attached to F(0) by a central stalk formed by the gamma and epsilon chains, while a peripheral stalk is formed by the delta and b chains.</text>
</comment>
<comment type="subcellular location">
    <subcellularLocation>
        <location evidence="1">Cell inner membrane</location>
        <topology evidence="1">Single-pass membrane protein</topology>
    </subcellularLocation>
</comment>
<comment type="similarity">
    <text evidence="1">Belongs to the ATPase B chain family.</text>
</comment>